<name>AMYG_CANAL</name>
<sequence length="946" mass="105717">MKLLSKVFVTALGLTSIVNAAPTSSSSAEEAQKTVPVELSIGVKQLPNIHNDSAVDANAVAKGYSLVNVSLTARGLTGILKLKEATNIYGYDFEYLNLSVEYQSDTRLNVHIEPTDLTDVFVLPEELVVKPKLEGDAKTFNFENSDLVFEYDEEDFGFEVLRSSTREVLFSTKGNPLVFSNQFIQFNTTLPKGHSITGLGESIHGSLNEPGVVKTLYANDIADPIDGNIYGVHPVYYDQRYNTNTTHAVYWRTSAIQEVVVGETSLTWRALSGVIDLYFFSGPDPKDVIQQYVSEIGLPAMQPYWALGYHQCRWGYDTVESLETVVENFKKFDIPLETIWSDIDYMDGYKDFTNDPYRFPTDKFRKFLDDLHNNSQHYVPIFDAAIYVPNPNNATDNDYEPFHLGNESDVFLKNPDGSLYIGAVWPGYTVFPDFLANNTQEYWNKMFKDWYERIPFDGIWTDMNEVSSFCVGSCGTGRYFDNPVHPPFEVGYSGSDYPLGFDKSNASEWKSISEAAAATKTTTTTSSSTSTSIDGKNTLAPGKGNINYPPYAINNNQGDHDLATHAISPNATHADGTVEYDIHNIYGLIQERAIYEALLEIHPNKRPFIIGRSSFAGSGKYMGHWGGDNYADYYMMYFSIPQALSMGLSGIPFFGVDACGFNGNTDMELCSRWMQLASFFPFYRNHNVLGAIPQEPYVWEGVMNATKTSINVRYSLLPYYYTLLHESHVTGIPIMRAFNWQFPYSKELAGVDTQFFVGDALLVTPVLEPGVNHTKGVFPGENAVYYDFYTHKKQKFTAGKNETLAAPLGHIPLHIKGGNIIPTQEPGYTTTESRKNPFGLLVALDAEGTASGKLYLDDGESVDVEEALYVDFVASKNKLVASVFGEYEVRQPLANVTILGVDSEPKKVLFNNETVSHNYENGAVYLTDLEKFTKEGAFAEEFSIQW</sequence>
<proteinExistence type="evidence at protein level"/>
<dbReference type="EC" id="3.2.1.3"/>
<dbReference type="EMBL" id="AF082188">
    <property type="protein sequence ID" value="AAC31968.1"/>
    <property type="molecule type" value="Genomic_DNA"/>
</dbReference>
<dbReference type="EMBL" id="CP017623">
    <property type="protein sequence ID" value="AOW26659.1"/>
    <property type="molecule type" value="Genomic_DNA"/>
</dbReference>
<dbReference type="RefSeq" id="XP_723581.2">
    <property type="nucleotide sequence ID" value="XM_718488.2"/>
</dbReference>
<dbReference type="SMR" id="O74254"/>
<dbReference type="BioGRID" id="1217997">
    <property type="interactions" value="1"/>
</dbReference>
<dbReference type="STRING" id="237561.O74254"/>
<dbReference type="CAZy" id="GH31">
    <property type="family name" value="Glycoside Hydrolase Family 31"/>
</dbReference>
<dbReference type="GlyCosmos" id="O74254">
    <property type="glycosylation" value="16 sites, No reported glycans"/>
</dbReference>
<dbReference type="EnsemblFungi" id="C1_10290W_A-T">
    <property type="protein sequence ID" value="C1_10290W_A-T-p1"/>
    <property type="gene ID" value="C1_10290W_A"/>
</dbReference>
<dbReference type="GeneID" id="3634903"/>
<dbReference type="KEGG" id="cal:CAALFM_C110290WA"/>
<dbReference type="CGD" id="CAL0000192588">
    <property type="gene designation" value="GCA1"/>
</dbReference>
<dbReference type="VEuPathDB" id="FungiDB:C1_10290W_A"/>
<dbReference type="eggNOG" id="KOG1065">
    <property type="taxonomic scope" value="Eukaryota"/>
</dbReference>
<dbReference type="HOGENOM" id="CLU_000631_11_0_1"/>
<dbReference type="InParanoid" id="O74254"/>
<dbReference type="OrthoDB" id="1334205at2759"/>
<dbReference type="PRO" id="PR:O74254"/>
<dbReference type="Proteomes" id="UP000000559">
    <property type="component" value="Chromosome 1"/>
</dbReference>
<dbReference type="GO" id="GO:0005576">
    <property type="term" value="C:extracellular region"/>
    <property type="evidence" value="ECO:0000314"/>
    <property type="project" value="CGD"/>
</dbReference>
<dbReference type="GO" id="GO:0016020">
    <property type="term" value="C:membrane"/>
    <property type="evidence" value="ECO:0007669"/>
    <property type="project" value="UniProtKB-SubCell"/>
</dbReference>
<dbReference type="GO" id="GO:0030246">
    <property type="term" value="F:carbohydrate binding"/>
    <property type="evidence" value="ECO:0007669"/>
    <property type="project" value="InterPro"/>
</dbReference>
<dbReference type="GO" id="GO:0004339">
    <property type="term" value="F:glucan 1,4-alpha-glucosidase activity"/>
    <property type="evidence" value="ECO:0007669"/>
    <property type="project" value="UniProtKB-EC"/>
</dbReference>
<dbReference type="GO" id="GO:0004553">
    <property type="term" value="F:hydrolase activity, hydrolyzing O-glycosyl compounds"/>
    <property type="evidence" value="ECO:0000318"/>
    <property type="project" value="GO_Central"/>
</dbReference>
<dbReference type="GO" id="GO:0071555">
    <property type="term" value="P:cell wall organization"/>
    <property type="evidence" value="ECO:0007669"/>
    <property type="project" value="UniProtKB-KW"/>
</dbReference>
<dbReference type="GO" id="GO:0000272">
    <property type="term" value="P:polysaccharide catabolic process"/>
    <property type="evidence" value="ECO:0007669"/>
    <property type="project" value="UniProtKB-KW"/>
</dbReference>
<dbReference type="GO" id="GO:0044011">
    <property type="term" value="P:single-species biofilm formation on inanimate substrate"/>
    <property type="evidence" value="ECO:0000315"/>
    <property type="project" value="CGD"/>
</dbReference>
<dbReference type="CDD" id="cd06602">
    <property type="entry name" value="GH31_MGAM_SI_GAA"/>
    <property type="match status" value="1"/>
</dbReference>
<dbReference type="CDD" id="cd14752">
    <property type="entry name" value="GH31_N"/>
    <property type="match status" value="1"/>
</dbReference>
<dbReference type="FunFam" id="2.60.40.1180:FF:000001">
    <property type="entry name" value="Maltase-glucoamylase, intestinal"/>
    <property type="match status" value="1"/>
</dbReference>
<dbReference type="FunFam" id="2.60.40.1180:FF:000005">
    <property type="entry name" value="Maltase-glucoamylase, intestinal"/>
    <property type="match status" value="1"/>
</dbReference>
<dbReference type="FunFam" id="3.20.20.80:FF:000138">
    <property type="entry name" value="Putative alpha-glucosidase AgdA"/>
    <property type="match status" value="1"/>
</dbReference>
<dbReference type="FunFam" id="3.20.20.80:FF:000169">
    <property type="entry name" value="Putative alpha-glucosidase AgdA"/>
    <property type="match status" value="1"/>
</dbReference>
<dbReference type="Gene3D" id="3.20.20.80">
    <property type="entry name" value="Glycosidases"/>
    <property type="match status" value="2"/>
</dbReference>
<dbReference type="Gene3D" id="2.60.40.1760">
    <property type="entry name" value="glycosyl hydrolase (family 31)"/>
    <property type="match status" value="1"/>
</dbReference>
<dbReference type="Gene3D" id="2.60.40.1180">
    <property type="entry name" value="Golgi alpha-mannosidase II"/>
    <property type="match status" value="2"/>
</dbReference>
<dbReference type="InterPro" id="IPR011013">
    <property type="entry name" value="Gal_mutarotase_sf_dom"/>
</dbReference>
<dbReference type="InterPro" id="IPR030458">
    <property type="entry name" value="Glyco_hydro_31_AS"/>
</dbReference>
<dbReference type="InterPro" id="IPR048395">
    <property type="entry name" value="Glyco_hydro_31_C"/>
</dbReference>
<dbReference type="InterPro" id="IPR030459">
    <property type="entry name" value="Glyco_hydro_31_CS"/>
</dbReference>
<dbReference type="InterPro" id="IPR000322">
    <property type="entry name" value="Glyco_hydro_31_TIM"/>
</dbReference>
<dbReference type="InterPro" id="IPR013780">
    <property type="entry name" value="Glyco_hydro_b"/>
</dbReference>
<dbReference type="InterPro" id="IPR017853">
    <property type="entry name" value="Glycoside_hydrolase_SF"/>
</dbReference>
<dbReference type="PANTHER" id="PTHR22762">
    <property type="entry name" value="ALPHA-GLUCOSIDASE"/>
    <property type="match status" value="1"/>
</dbReference>
<dbReference type="PANTHER" id="PTHR22762:SF133">
    <property type="entry name" value="P-TYPE DOMAIN-CONTAINING PROTEIN"/>
    <property type="match status" value="1"/>
</dbReference>
<dbReference type="Pfam" id="PF01055">
    <property type="entry name" value="Glyco_hydro_31_2nd"/>
    <property type="match status" value="1"/>
</dbReference>
<dbReference type="Pfam" id="PF21365">
    <property type="entry name" value="Glyco_hydro_31_3rd"/>
    <property type="match status" value="1"/>
</dbReference>
<dbReference type="SUPFAM" id="SSF51445">
    <property type="entry name" value="(Trans)glycosidases"/>
    <property type="match status" value="1"/>
</dbReference>
<dbReference type="SUPFAM" id="SSF74650">
    <property type="entry name" value="Galactose mutarotase-like"/>
    <property type="match status" value="1"/>
</dbReference>
<dbReference type="SUPFAM" id="SSF51011">
    <property type="entry name" value="Glycosyl hydrolase domain"/>
    <property type="match status" value="1"/>
</dbReference>
<dbReference type="PROSITE" id="PS00129">
    <property type="entry name" value="GLYCOSYL_HYDROL_F31_1"/>
    <property type="match status" value="1"/>
</dbReference>
<dbReference type="PROSITE" id="PS00707">
    <property type="entry name" value="GLYCOSYL_HYDROL_F31_2"/>
    <property type="match status" value="1"/>
</dbReference>
<gene>
    <name type="primary">GAM1</name>
    <name type="synonym">GCA1</name>
    <name type="ordered locus">CAALFM_C110290WA</name>
    <name type="ORF">CaO19.12365</name>
    <name type="ORF">CaO19.4899</name>
</gene>
<feature type="signal peptide" evidence="2">
    <location>
        <begin position="1"/>
        <end position="20"/>
    </location>
</feature>
<feature type="chain" id="PRO_0000018585" description="Glucoamylase 1">
    <location>
        <begin position="21"/>
        <end position="946"/>
    </location>
</feature>
<feature type="region of interest" description="Disordered" evidence="5">
    <location>
        <begin position="517"/>
        <end position="541"/>
    </location>
</feature>
<feature type="compositionally biased region" description="Low complexity" evidence="5">
    <location>
        <begin position="517"/>
        <end position="532"/>
    </location>
</feature>
<feature type="active site" evidence="1">
    <location>
        <position position="462"/>
    </location>
</feature>
<feature type="active site" evidence="1">
    <location>
        <position position="465"/>
    </location>
</feature>
<feature type="active site" description="Proton donor" evidence="1">
    <location>
        <position position="628"/>
    </location>
</feature>
<feature type="glycosylation site" description="N-linked (GlcNAc...) asparagine" evidence="3">
    <location>
        <position position="51"/>
    </location>
</feature>
<feature type="glycosylation site" description="N-linked (GlcNAc...) asparagine" evidence="3">
    <location>
        <position position="68"/>
    </location>
</feature>
<feature type="glycosylation site" description="N-linked (GlcNAc...) asparagine" evidence="3">
    <location>
        <position position="97"/>
    </location>
</feature>
<feature type="glycosylation site" description="N-linked (GlcNAc...) asparagine" evidence="3">
    <location>
        <position position="187"/>
    </location>
</feature>
<feature type="glycosylation site" description="N-linked (GlcNAc...) asparagine" evidence="3">
    <location>
        <position position="244"/>
    </location>
</feature>
<feature type="glycosylation site" description="N-linked (GlcNAc...) asparagine" evidence="3">
    <location>
        <position position="373"/>
    </location>
</feature>
<feature type="glycosylation site" description="N-linked (GlcNAc...) asparagine" evidence="3">
    <location>
        <position position="393"/>
    </location>
</feature>
<feature type="glycosylation site" description="N-linked (GlcNAc...) asparagine" evidence="3">
    <location>
        <position position="406"/>
    </location>
</feature>
<feature type="glycosylation site" description="N-linked (GlcNAc...) asparagine" evidence="3">
    <location>
        <position position="437"/>
    </location>
</feature>
<feature type="glycosylation site" description="N-linked (GlcNAc...) asparagine" evidence="3">
    <location>
        <position position="505"/>
    </location>
</feature>
<feature type="glycosylation site" description="N-linked (GlcNAc...) asparagine" evidence="3">
    <location>
        <position position="570"/>
    </location>
</feature>
<feature type="glycosylation site" description="N-linked (GlcNAc...) asparagine" evidence="3">
    <location>
        <position position="704"/>
    </location>
</feature>
<feature type="glycosylation site" description="N-linked (GlcNAc...) asparagine" evidence="3">
    <location>
        <position position="772"/>
    </location>
</feature>
<feature type="glycosylation site" description="N-linked (GlcNAc...) asparagine" evidence="3">
    <location>
        <position position="801"/>
    </location>
</feature>
<feature type="glycosylation site" description="N-linked (GlcNAc...) asparagine" evidence="3">
    <location>
        <position position="895"/>
    </location>
</feature>
<feature type="glycosylation site" description="N-linked (GlcNAc...) asparagine" evidence="3">
    <location>
        <position position="912"/>
    </location>
</feature>
<feature type="sequence conflict" description="In Ref. 1; AAC31968." evidence="6" ref="1">
    <original>N</original>
    <variation>D</variation>
    <location>
        <position position="242"/>
    </location>
</feature>
<feature type="sequence conflict" description="In Ref. 1; AAC31968." evidence="6" ref="1">
    <original>A</original>
    <variation>G</variation>
    <location>
        <position position="248"/>
    </location>
</feature>
<feature type="sequence conflict" description="In Ref. 1; AAC31968." evidence="6" ref="1">
    <original>N</original>
    <variation>D</variation>
    <location>
        <position position="397"/>
    </location>
</feature>
<feature type="sequence conflict" description="In Ref. 1; AAC31968." evidence="6" ref="1">
    <original>G</original>
    <variation>D</variation>
    <location>
        <position position="477"/>
    </location>
</feature>
<feature type="sequence conflict" description="In Ref. 1; AAC31968." evidence="6" ref="1">
    <original>T</original>
    <variation>A</variation>
    <location>
        <position position="529"/>
    </location>
</feature>
<feature type="sequence conflict" description="In Ref. 1; AAC31968." evidence="6" ref="1">
    <original>N</original>
    <variation>D</variation>
    <location>
        <position position="556"/>
    </location>
</feature>
<feature type="sequence conflict" description="In Ref. 1; AAC31968." evidence="6" ref="1">
    <original>G</original>
    <variation>A</variation>
    <location>
        <position position="701"/>
    </location>
</feature>
<feature type="sequence conflict" description="In Ref. 1; AAC31968." evidence="6" ref="1">
    <original>N</original>
    <variation>K</variation>
    <location>
        <position position="704"/>
    </location>
</feature>
<feature type="sequence conflict" description="In Ref. 1; AAC31968." evidence="6" ref="1">
    <original>V</original>
    <variation>I</variation>
    <location>
        <position position="777"/>
    </location>
</feature>
<feature type="sequence conflict" description="In Ref. 1; AAC31968." evidence="6" ref="1">
    <original>N</original>
    <variation>K</variation>
    <location>
        <position position="918"/>
    </location>
</feature>
<feature type="sequence conflict" description="In Ref. 1; AAC31968." evidence="6" ref="1">
    <original>SI</original>
    <variation>TL</variation>
    <location>
        <begin position="943"/>
        <end position="944"/>
    </location>
</feature>
<comment type="catalytic activity">
    <reaction evidence="4">
        <text>Hydrolysis of terminal (1-&gt;4)-linked alpha-D-glucose residues successively from non-reducing ends of the chains with release of beta-D-glucose.</text>
        <dbReference type="EC" id="3.2.1.3"/>
    </reaction>
</comment>
<comment type="subcellular location">
    <subcellularLocation>
        <location>Secreted</location>
        <location>Cell wall</location>
    </subcellularLocation>
    <subcellularLocation>
        <location>Membrane</location>
        <topology>Peripheral membrane protein</topology>
    </subcellularLocation>
</comment>
<comment type="PTM">
    <text>The N-terminus is blocked.</text>
</comment>
<comment type="similarity">
    <text evidence="6">Belongs to the glycosyl hydrolase 31 family.</text>
</comment>
<reference key="1">
    <citation type="journal article" date="1999" name="Med. Mycol.">
        <title>Identification and cloning of GCA1, a gene that encodes a cell surface glucoamylase from Candida albicans.</title>
        <authorList>
            <person name="Sturtevant J."/>
            <person name="Dixon F."/>
            <person name="Wadsworth E."/>
            <person name="Latge J.-P."/>
            <person name="Zhao X.-J."/>
            <person name="Calderone R."/>
        </authorList>
    </citation>
    <scope>NUCLEOTIDE SEQUENCE [GENOMIC DNA]</scope>
    <scope>PROTEIN SEQUENCE OF 193-213; 776-792 AND 817-835</scope>
    <source>
        <strain>SC5314 / ATCC MYA-2876</strain>
    </source>
</reference>
<reference key="2">
    <citation type="journal article" date="2004" name="Proc. Natl. Acad. Sci. U.S.A.">
        <title>The diploid genome sequence of Candida albicans.</title>
        <authorList>
            <person name="Jones T."/>
            <person name="Federspiel N.A."/>
            <person name="Chibana H."/>
            <person name="Dungan J."/>
            <person name="Kalman S."/>
            <person name="Magee B.B."/>
            <person name="Newport G."/>
            <person name="Thorstenson Y.R."/>
            <person name="Agabian N."/>
            <person name="Magee P.T."/>
            <person name="Davis R.W."/>
            <person name="Scherer S."/>
        </authorList>
    </citation>
    <scope>NUCLEOTIDE SEQUENCE [LARGE SCALE GENOMIC DNA]</scope>
    <source>
        <strain>SC5314 / ATCC MYA-2876</strain>
    </source>
</reference>
<reference key="3">
    <citation type="journal article" date="2007" name="Genome Biol.">
        <title>Assembly of the Candida albicans genome into sixteen supercontigs aligned on the eight chromosomes.</title>
        <authorList>
            <person name="van het Hoog M."/>
            <person name="Rast T.J."/>
            <person name="Martchenko M."/>
            <person name="Grindle S."/>
            <person name="Dignard D."/>
            <person name="Hogues H."/>
            <person name="Cuomo C."/>
            <person name="Berriman M."/>
            <person name="Scherer S."/>
            <person name="Magee B.B."/>
            <person name="Whiteway M."/>
            <person name="Chibana H."/>
            <person name="Nantel A."/>
            <person name="Magee P.T."/>
        </authorList>
    </citation>
    <scope>GENOME REANNOTATION</scope>
    <source>
        <strain>SC5314 / ATCC MYA-2876</strain>
    </source>
</reference>
<reference key="4">
    <citation type="journal article" date="2013" name="Genome Biol.">
        <title>Assembly of a phased diploid Candida albicans genome facilitates allele-specific measurements and provides a simple model for repeat and indel structure.</title>
        <authorList>
            <person name="Muzzey D."/>
            <person name="Schwartz K."/>
            <person name="Weissman J.S."/>
            <person name="Sherlock G."/>
        </authorList>
    </citation>
    <scope>NUCLEOTIDE SEQUENCE [LARGE SCALE GENOMIC DNA]</scope>
    <scope>GENOME REANNOTATION</scope>
    <source>
        <strain>SC5314 / ATCC MYA-2876</strain>
    </source>
</reference>
<accession>O74254</accession>
<accession>A0A1D8PEU6</accession>
<accession>Q5AP64</accession>
<accession>Q5APQ9</accession>
<organism>
    <name type="scientific">Candida albicans (strain SC5314 / ATCC MYA-2876)</name>
    <name type="common">Yeast</name>
    <dbReference type="NCBI Taxonomy" id="237561"/>
    <lineage>
        <taxon>Eukaryota</taxon>
        <taxon>Fungi</taxon>
        <taxon>Dikarya</taxon>
        <taxon>Ascomycota</taxon>
        <taxon>Saccharomycotina</taxon>
        <taxon>Pichiomycetes</taxon>
        <taxon>Debaryomycetaceae</taxon>
        <taxon>Candida/Lodderomyces clade</taxon>
        <taxon>Candida</taxon>
    </lineage>
</organism>
<protein>
    <recommendedName>
        <fullName>Glucoamylase 1</fullName>
        <ecNumber>3.2.1.3</ecNumber>
    </recommendedName>
    <alternativeName>
        <fullName>1,4-alpha-D-glucan glucohydrolase</fullName>
    </alternativeName>
    <alternativeName>
        <fullName>Glucan 1,4-alpha-glucosidase</fullName>
    </alternativeName>
</protein>
<evidence type="ECO:0000250" key="1"/>
<evidence type="ECO:0000255" key="2"/>
<evidence type="ECO:0000255" key="3">
    <source>
        <dbReference type="PROSITE-ProRule" id="PRU00498"/>
    </source>
</evidence>
<evidence type="ECO:0000255" key="4">
    <source>
        <dbReference type="PROSITE-ProRule" id="PRU10066"/>
    </source>
</evidence>
<evidence type="ECO:0000256" key="5">
    <source>
        <dbReference type="SAM" id="MobiDB-lite"/>
    </source>
</evidence>
<evidence type="ECO:0000305" key="6"/>
<keyword id="KW-0119">Carbohydrate metabolism</keyword>
<keyword id="KW-0134">Cell wall</keyword>
<keyword id="KW-0961">Cell wall biogenesis/degradation</keyword>
<keyword id="KW-0903">Direct protein sequencing</keyword>
<keyword id="KW-0325">Glycoprotein</keyword>
<keyword id="KW-0326">Glycosidase</keyword>
<keyword id="KW-0378">Hydrolase</keyword>
<keyword id="KW-0472">Membrane</keyword>
<keyword id="KW-0624">Polysaccharide degradation</keyword>
<keyword id="KW-1185">Reference proteome</keyword>
<keyword id="KW-0964">Secreted</keyword>
<keyword id="KW-0732">Signal</keyword>